<name>YHGN_SHIFL</name>
<gene>
    <name type="primary">yhgN</name>
    <name type="ordered locus">SF3457</name>
    <name type="ordered locus">S4306</name>
</gene>
<organism>
    <name type="scientific">Shigella flexneri</name>
    <dbReference type="NCBI Taxonomy" id="623"/>
    <lineage>
        <taxon>Bacteria</taxon>
        <taxon>Pseudomonadati</taxon>
        <taxon>Pseudomonadota</taxon>
        <taxon>Gammaproteobacteria</taxon>
        <taxon>Enterobacterales</taxon>
        <taxon>Enterobacteriaceae</taxon>
        <taxon>Shigella</taxon>
    </lineage>
</organism>
<protein>
    <recommendedName>
        <fullName>UPF0056 inner membrane protein YhgN</fullName>
    </recommendedName>
</protein>
<dbReference type="EMBL" id="AE005674">
    <property type="protein sequence ID" value="AAN44917.1"/>
    <property type="molecule type" value="Genomic_DNA"/>
</dbReference>
<dbReference type="EMBL" id="AE014073">
    <property type="protein sequence ID" value="AAP19264.1"/>
    <property type="molecule type" value="Genomic_DNA"/>
</dbReference>
<dbReference type="RefSeq" id="NP_709210.1">
    <property type="nucleotide sequence ID" value="NC_004337.2"/>
</dbReference>
<dbReference type="RefSeq" id="WP_001002544.1">
    <property type="nucleotide sequence ID" value="NZ_WPGW01000010.1"/>
</dbReference>
<dbReference type="PaxDb" id="198214-SF3457"/>
<dbReference type="GeneID" id="1026466"/>
<dbReference type="GeneID" id="93778555"/>
<dbReference type="KEGG" id="sfl:SF3457"/>
<dbReference type="KEGG" id="sfx:S4306"/>
<dbReference type="PATRIC" id="fig|198214.7.peg.4077"/>
<dbReference type="HOGENOM" id="CLU_079909_1_1_6"/>
<dbReference type="Proteomes" id="UP000001006">
    <property type="component" value="Chromosome"/>
</dbReference>
<dbReference type="Proteomes" id="UP000002673">
    <property type="component" value="Chromosome"/>
</dbReference>
<dbReference type="GO" id="GO:0005886">
    <property type="term" value="C:plasma membrane"/>
    <property type="evidence" value="ECO:0007669"/>
    <property type="project" value="UniProtKB-SubCell"/>
</dbReference>
<dbReference type="InterPro" id="IPR002771">
    <property type="entry name" value="Multi_antbiot-R_MarC"/>
</dbReference>
<dbReference type="NCBIfam" id="TIGR00427">
    <property type="entry name" value="NAAT family transporter"/>
    <property type="match status" value="1"/>
</dbReference>
<dbReference type="NCBIfam" id="NF008010">
    <property type="entry name" value="PRK10739.1"/>
    <property type="match status" value="1"/>
</dbReference>
<dbReference type="PANTHER" id="PTHR33508:SF10">
    <property type="entry name" value="UPF0056 INNER MEMBRANE PROTEIN YHGN"/>
    <property type="match status" value="1"/>
</dbReference>
<dbReference type="PANTHER" id="PTHR33508">
    <property type="entry name" value="UPF0056 MEMBRANE PROTEIN YHCE"/>
    <property type="match status" value="1"/>
</dbReference>
<dbReference type="Pfam" id="PF01914">
    <property type="entry name" value="MarC"/>
    <property type="match status" value="1"/>
</dbReference>
<accession>P67145</accession>
<accession>P46851</accession>
<comment type="subcellular location">
    <subcellularLocation>
        <location evidence="1">Cell inner membrane</location>
        <topology evidence="1">Multi-pass membrane protein</topology>
    </subcellularLocation>
</comment>
<comment type="similarity">
    <text evidence="3">Belongs to the UPF0056 (MarC) family.</text>
</comment>
<sequence length="197" mass="21490">MNEIISAAVLLILIMDPLGNLPIFMSVLKHTEPKRRRAIMVRELLIALLVMLVFLFAGEKILAFLSLRAETVSISGGIILFLIAIKMIFPSASGNSSGLPAGEEPFIVPLAIPLVAGPTILATLMLLSHQYPNQMGHLVIALLLAWGGTFVILLQSSLFLRLLGEKGVNALERLMGLILVMMATQMFLDGIRMWMKG</sequence>
<feature type="chain" id="PRO_0000156904" description="UPF0056 inner membrane protein YhgN">
    <location>
        <begin position="1"/>
        <end position="197"/>
    </location>
</feature>
<feature type="topological domain" description="Periplasmic" evidence="2">
    <location>
        <begin position="1"/>
        <end position="3"/>
    </location>
</feature>
<feature type="transmembrane region" description="Helical" evidence="2">
    <location>
        <begin position="4"/>
        <end position="24"/>
    </location>
</feature>
<feature type="topological domain" description="Cytoplasmic" evidence="2">
    <location>
        <begin position="25"/>
        <end position="44"/>
    </location>
</feature>
<feature type="transmembrane region" description="Helical" evidence="2">
    <location>
        <begin position="45"/>
        <end position="65"/>
    </location>
</feature>
<feature type="topological domain" description="Periplasmic" evidence="2">
    <location>
        <begin position="66"/>
        <end position="71"/>
    </location>
</feature>
<feature type="transmembrane region" description="Helical" evidence="2">
    <location>
        <begin position="72"/>
        <end position="92"/>
    </location>
</feature>
<feature type="topological domain" description="Cytoplasmic" evidence="2">
    <location>
        <begin position="93"/>
        <end position="105"/>
    </location>
</feature>
<feature type="transmembrane region" description="Helical" evidence="2">
    <location>
        <begin position="106"/>
        <end position="126"/>
    </location>
</feature>
<feature type="topological domain" description="Periplasmic" evidence="2">
    <location>
        <begin position="127"/>
        <end position="138"/>
    </location>
</feature>
<feature type="transmembrane region" description="Helical" evidence="2">
    <location>
        <begin position="139"/>
        <end position="159"/>
    </location>
</feature>
<feature type="topological domain" description="Cytoplasmic" evidence="2">
    <location>
        <begin position="160"/>
        <end position="173"/>
    </location>
</feature>
<feature type="transmembrane region" description="Helical" evidence="2">
    <location>
        <begin position="174"/>
        <end position="194"/>
    </location>
</feature>
<feature type="topological domain" description="Periplasmic" evidence="2">
    <location>
        <begin position="195"/>
        <end position="197"/>
    </location>
</feature>
<evidence type="ECO:0000250" key="1"/>
<evidence type="ECO:0000255" key="2"/>
<evidence type="ECO:0000305" key="3"/>
<reference key="1">
    <citation type="journal article" date="2002" name="Nucleic Acids Res.">
        <title>Genome sequence of Shigella flexneri 2a: insights into pathogenicity through comparison with genomes of Escherichia coli K12 and O157.</title>
        <authorList>
            <person name="Jin Q."/>
            <person name="Yuan Z."/>
            <person name="Xu J."/>
            <person name="Wang Y."/>
            <person name="Shen Y."/>
            <person name="Lu W."/>
            <person name="Wang J."/>
            <person name="Liu H."/>
            <person name="Yang J."/>
            <person name="Yang F."/>
            <person name="Zhang X."/>
            <person name="Zhang J."/>
            <person name="Yang G."/>
            <person name="Wu H."/>
            <person name="Qu D."/>
            <person name="Dong J."/>
            <person name="Sun L."/>
            <person name="Xue Y."/>
            <person name="Zhao A."/>
            <person name="Gao Y."/>
            <person name="Zhu J."/>
            <person name="Kan B."/>
            <person name="Ding K."/>
            <person name="Chen S."/>
            <person name="Cheng H."/>
            <person name="Yao Z."/>
            <person name="He B."/>
            <person name="Chen R."/>
            <person name="Ma D."/>
            <person name="Qiang B."/>
            <person name="Wen Y."/>
            <person name="Hou Y."/>
            <person name="Yu J."/>
        </authorList>
    </citation>
    <scope>NUCLEOTIDE SEQUENCE [LARGE SCALE GENOMIC DNA]</scope>
    <source>
        <strain>301 / Serotype 2a</strain>
    </source>
</reference>
<reference key="2">
    <citation type="journal article" date="2003" name="Infect. Immun.">
        <title>Complete genome sequence and comparative genomics of Shigella flexneri serotype 2a strain 2457T.</title>
        <authorList>
            <person name="Wei J."/>
            <person name="Goldberg M.B."/>
            <person name="Burland V."/>
            <person name="Venkatesan M.M."/>
            <person name="Deng W."/>
            <person name="Fournier G."/>
            <person name="Mayhew G.F."/>
            <person name="Plunkett G. III"/>
            <person name="Rose D.J."/>
            <person name="Darling A."/>
            <person name="Mau B."/>
            <person name="Perna N.T."/>
            <person name="Payne S.M."/>
            <person name="Runyen-Janecky L.J."/>
            <person name="Zhou S."/>
            <person name="Schwartz D.C."/>
            <person name="Blattner F.R."/>
        </authorList>
    </citation>
    <scope>NUCLEOTIDE SEQUENCE [LARGE SCALE GENOMIC DNA]</scope>
    <source>
        <strain>ATCC 700930 / 2457T / Serotype 2a</strain>
    </source>
</reference>
<proteinExistence type="inferred from homology"/>
<keyword id="KW-0997">Cell inner membrane</keyword>
<keyword id="KW-1003">Cell membrane</keyword>
<keyword id="KW-0472">Membrane</keyword>
<keyword id="KW-1185">Reference proteome</keyword>
<keyword id="KW-0812">Transmembrane</keyword>
<keyword id="KW-1133">Transmembrane helix</keyword>